<dbReference type="EC" id="3.1.2.6" evidence="1"/>
<dbReference type="EMBL" id="CP000117">
    <property type="protein sequence ID" value="ABA19954.1"/>
    <property type="molecule type" value="Genomic_DNA"/>
</dbReference>
<dbReference type="SMR" id="Q3MGD2"/>
<dbReference type="STRING" id="240292.Ava_0328"/>
<dbReference type="KEGG" id="ava:Ava_0328"/>
<dbReference type="eggNOG" id="COG0491">
    <property type="taxonomic scope" value="Bacteria"/>
</dbReference>
<dbReference type="HOGENOM" id="CLU_030571_4_1_3"/>
<dbReference type="UniPathway" id="UPA00619">
    <property type="reaction ID" value="UER00676"/>
</dbReference>
<dbReference type="Proteomes" id="UP000002533">
    <property type="component" value="Chromosome"/>
</dbReference>
<dbReference type="GO" id="GO:0004416">
    <property type="term" value="F:hydroxyacylglutathione hydrolase activity"/>
    <property type="evidence" value="ECO:0007669"/>
    <property type="project" value="UniProtKB-UniRule"/>
</dbReference>
<dbReference type="GO" id="GO:0046872">
    <property type="term" value="F:metal ion binding"/>
    <property type="evidence" value="ECO:0007669"/>
    <property type="project" value="UniProtKB-KW"/>
</dbReference>
<dbReference type="GO" id="GO:0019243">
    <property type="term" value="P:methylglyoxal catabolic process to D-lactate via S-lactoyl-glutathione"/>
    <property type="evidence" value="ECO:0007669"/>
    <property type="project" value="InterPro"/>
</dbReference>
<dbReference type="CDD" id="cd07723">
    <property type="entry name" value="hydroxyacylglutathione_hydrolase_MBL-fold"/>
    <property type="match status" value="1"/>
</dbReference>
<dbReference type="Gene3D" id="3.60.15.10">
    <property type="entry name" value="Ribonuclease Z/Hydroxyacylglutathione hydrolase-like"/>
    <property type="match status" value="1"/>
</dbReference>
<dbReference type="HAMAP" id="MF_01374">
    <property type="entry name" value="Glyoxalase_2"/>
    <property type="match status" value="1"/>
</dbReference>
<dbReference type="InterPro" id="IPR035680">
    <property type="entry name" value="Clx_II_MBL"/>
</dbReference>
<dbReference type="InterPro" id="IPR050110">
    <property type="entry name" value="Glyoxalase_II_hydrolase"/>
</dbReference>
<dbReference type="InterPro" id="IPR032282">
    <property type="entry name" value="HAGH_C"/>
</dbReference>
<dbReference type="InterPro" id="IPR017782">
    <property type="entry name" value="Hydroxyacylglutathione_Hdrlase"/>
</dbReference>
<dbReference type="InterPro" id="IPR001279">
    <property type="entry name" value="Metallo-B-lactamas"/>
</dbReference>
<dbReference type="InterPro" id="IPR036866">
    <property type="entry name" value="RibonucZ/Hydroxyglut_hydro"/>
</dbReference>
<dbReference type="NCBIfam" id="TIGR03413">
    <property type="entry name" value="GSH_gloB"/>
    <property type="match status" value="1"/>
</dbReference>
<dbReference type="PANTHER" id="PTHR43705">
    <property type="entry name" value="HYDROXYACYLGLUTATHIONE HYDROLASE"/>
    <property type="match status" value="1"/>
</dbReference>
<dbReference type="PANTHER" id="PTHR43705:SF1">
    <property type="entry name" value="HYDROXYACYLGLUTATHIONE HYDROLASE GLOB"/>
    <property type="match status" value="1"/>
</dbReference>
<dbReference type="Pfam" id="PF16123">
    <property type="entry name" value="HAGH_C"/>
    <property type="match status" value="1"/>
</dbReference>
<dbReference type="Pfam" id="PF00753">
    <property type="entry name" value="Lactamase_B"/>
    <property type="match status" value="1"/>
</dbReference>
<dbReference type="PIRSF" id="PIRSF005457">
    <property type="entry name" value="Glx"/>
    <property type="match status" value="1"/>
</dbReference>
<dbReference type="SMART" id="SM00849">
    <property type="entry name" value="Lactamase_B"/>
    <property type="match status" value="1"/>
</dbReference>
<dbReference type="SUPFAM" id="SSF56281">
    <property type="entry name" value="Metallo-hydrolase/oxidoreductase"/>
    <property type="match status" value="1"/>
</dbReference>
<name>GLO2_TRIV2</name>
<evidence type="ECO:0000255" key="1">
    <source>
        <dbReference type="HAMAP-Rule" id="MF_01374"/>
    </source>
</evidence>
<organism>
    <name type="scientific">Trichormus variabilis (strain ATCC 29413 / PCC 7937)</name>
    <name type="common">Anabaena variabilis</name>
    <dbReference type="NCBI Taxonomy" id="240292"/>
    <lineage>
        <taxon>Bacteria</taxon>
        <taxon>Bacillati</taxon>
        <taxon>Cyanobacteriota</taxon>
        <taxon>Cyanophyceae</taxon>
        <taxon>Nostocales</taxon>
        <taxon>Nostocaceae</taxon>
        <taxon>Trichormus</taxon>
    </lineage>
</organism>
<comment type="function">
    <text evidence="1">Thiolesterase that catalyzes the hydrolysis of S-D-lactoyl-glutathione to form glutathione and D-lactic acid.</text>
</comment>
<comment type="catalytic activity">
    <reaction evidence="1">
        <text>an S-(2-hydroxyacyl)glutathione + H2O = a 2-hydroxy carboxylate + glutathione + H(+)</text>
        <dbReference type="Rhea" id="RHEA:21864"/>
        <dbReference type="ChEBI" id="CHEBI:15377"/>
        <dbReference type="ChEBI" id="CHEBI:15378"/>
        <dbReference type="ChEBI" id="CHEBI:57925"/>
        <dbReference type="ChEBI" id="CHEBI:58896"/>
        <dbReference type="ChEBI" id="CHEBI:71261"/>
        <dbReference type="EC" id="3.1.2.6"/>
    </reaction>
</comment>
<comment type="cofactor">
    <cofactor evidence="1">
        <name>Zn(2+)</name>
        <dbReference type="ChEBI" id="CHEBI:29105"/>
    </cofactor>
    <text evidence="1">Binds 2 Zn(2+) ions per subunit.</text>
</comment>
<comment type="pathway">
    <text evidence="1">Secondary metabolite metabolism; methylglyoxal degradation; (R)-lactate from methylglyoxal: step 2/2.</text>
</comment>
<comment type="subunit">
    <text evidence="1">Monomer.</text>
</comment>
<comment type="similarity">
    <text evidence="1">Belongs to the metallo-beta-lactamase superfamily. Glyoxalase II family.</text>
</comment>
<gene>
    <name evidence="1" type="primary">gloB</name>
    <name type="ordered locus">Ava_0328</name>
</gene>
<keyword id="KW-0378">Hydrolase</keyword>
<keyword id="KW-0479">Metal-binding</keyword>
<keyword id="KW-0862">Zinc</keyword>
<sequence>MQVIRLAALSDNYIFLLHDSQKNIAAVVDPAEAEPVLKQLAQLNAELVAIFNTHHHNDHVGGNQQLIQNFPQLKVYGGAEDKGRIPGQQVFLQPGDRVQFTDRVAEVIFVPGHTRAHIAYYFPPQTADTPGELFCGDTLFAGGCGRLFEGTPAQMVESLTKLRSLPENTRVWCAHEYTLKNLQFALSVDSENTELQKRFDEVKTKRSQGIATVPSLLGVEKLTNPFLRWEQPSLQSAVNSNDPVQTFARIRGLKDKF</sequence>
<feature type="chain" id="PRO_1000068207" description="Hydroxyacylglutathione hydrolase">
    <location>
        <begin position="1"/>
        <end position="257"/>
    </location>
</feature>
<feature type="binding site" evidence="1">
    <location>
        <position position="54"/>
    </location>
    <ligand>
        <name>Zn(2+)</name>
        <dbReference type="ChEBI" id="CHEBI:29105"/>
        <label>1</label>
    </ligand>
</feature>
<feature type="binding site" evidence="1">
    <location>
        <position position="56"/>
    </location>
    <ligand>
        <name>Zn(2+)</name>
        <dbReference type="ChEBI" id="CHEBI:29105"/>
        <label>1</label>
    </ligand>
</feature>
<feature type="binding site" evidence="1">
    <location>
        <position position="58"/>
    </location>
    <ligand>
        <name>Zn(2+)</name>
        <dbReference type="ChEBI" id="CHEBI:29105"/>
        <label>2</label>
    </ligand>
</feature>
<feature type="binding site" evidence="1">
    <location>
        <position position="59"/>
    </location>
    <ligand>
        <name>Zn(2+)</name>
        <dbReference type="ChEBI" id="CHEBI:29105"/>
        <label>2</label>
    </ligand>
</feature>
<feature type="binding site" evidence="1">
    <location>
        <position position="113"/>
    </location>
    <ligand>
        <name>Zn(2+)</name>
        <dbReference type="ChEBI" id="CHEBI:29105"/>
        <label>1</label>
    </ligand>
</feature>
<feature type="binding site" evidence="1">
    <location>
        <position position="137"/>
    </location>
    <ligand>
        <name>Zn(2+)</name>
        <dbReference type="ChEBI" id="CHEBI:29105"/>
        <label>1</label>
    </ligand>
</feature>
<feature type="binding site" evidence="1">
    <location>
        <position position="137"/>
    </location>
    <ligand>
        <name>Zn(2+)</name>
        <dbReference type="ChEBI" id="CHEBI:29105"/>
        <label>2</label>
    </ligand>
</feature>
<feature type="binding site" evidence="1">
    <location>
        <position position="175"/>
    </location>
    <ligand>
        <name>Zn(2+)</name>
        <dbReference type="ChEBI" id="CHEBI:29105"/>
        <label>2</label>
    </ligand>
</feature>
<protein>
    <recommendedName>
        <fullName evidence="1">Hydroxyacylglutathione hydrolase</fullName>
        <ecNumber evidence="1">3.1.2.6</ecNumber>
    </recommendedName>
    <alternativeName>
        <fullName evidence="1">Glyoxalase II</fullName>
        <shortName evidence="1">Glx II</shortName>
    </alternativeName>
</protein>
<reference key="1">
    <citation type="journal article" date="2014" name="Stand. Genomic Sci.">
        <title>Complete genome sequence of Anabaena variabilis ATCC 29413.</title>
        <authorList>
            <person name="Thiel T."/>
            <person name="Pratte B.S."/>
            <person name="Zhong J."/>
            <person name="Goodwin L."/>
            <person name="Copeland A."/>
            <person name="Lucas S."/>
            <person name="Han C."/>
            <person name="Pitluck S."/>
            <person name="Land M.L."/>
            <person name="Kyrpides N.C."/>
            <person name="Woyke T."/>
        </authorList>
    </citation>
    <scope>NUCLEOTIDE SEQUENCE [LARGE SCALE GENOMIC DNA]</scope>
    <source>
        <strain>ATCC 29413 / PCC 7937</strain>
    </source>
</reference>
<proteinExistence type="inferred from homology"/>
<accession>Q3MGD2</accession>